<name>DAPH_CLOP1</name>
<accession>Q0TP51</accession>
<comment type="function">
    <text evidence="1">Catalyzes the transfer of an acetyl group from acetyl-CoA to tetrahydrodipicolinate.</text>
</comment>
<comment type="catalytic activity">
    <reaction evidence="1">
        <text>(S)-2,3,4,5-tetrahydrodipicolinate + acetyl-CoA + H2O = L-2-acetamido-6-oxoheptanedioate + CoA</text>
        <dbReference type="Rhea" id="RHEA:13085"/>
        <dbReference type="ChEBI" id="CHEBI:15377"/>
        <dbReference type="ChEBI" id="CHEBI:16845"/>
        <dbReference type="ChEBI" id="CHEBI:57287"/>
        <dbReference type="ChEBI" id="CHEBI:57288"/>
        <dbReference type="ChEBI" id="CHEBI:58117"/>
        <dbReference type="EC" id="2.3.1.89"/>
    </reaction>
</comment>
<comment type="pathway">
    <text evidence="1">Amino-acid biosynthesis; L-lysine biosynthesis via DAP pathway; LL-2,6-diaminopimelate from (S)-tetrahydrodipicolinate (acetylase route): step 1/3.</text>
</comment>
<comment type="similarity">
    <text evidence="1">Belongs to the transferase hexapeptide repeat family. DapH subfamily.</text>
</comment>
<proteinExistence type="inferred from homology"/>
<feature type="chain" id="PRO_0000376654" description="2,3,4,5-tetrahydropyridine-2,6-dicarboxylate N-acetyltransferase">
    <location>
        <begin position="1"/>
        <end position="236"/>
    </location>
</feature>
<keyword id="KW-0012">Acyltransferase</keyword>
<keyword id="KW-0028">Amino-acid biosynthesis</keyword>
<keyword id="KW-0220">Diaminopimelate biosynthesis</keyword>
<keyword id="KW-0457">Lysine biosynthesis</keyword>
<keyword id="KW-0677">Repeat</keyword>
<keyword id="KW-0808">Transferase</keyword>
<organism>
    <name type="scientific">Clostridium perfringens (strain ATCC 13124 / DSM 756 / JCM 1290 / NCIMB 6125 / NCTC 8237 / Type A)</name>
    <dbReference type="NCBI Taxonomy" id="195103"/>
    <lineage>
        <taxon>Bacteria</taxon>
        <taxon>Bacillati</taxon>
        <taxon>Bacillota</taxon>
        <taxon>Clostridia</taxon>
        <taxon>Eubacteriales</taxon>
        <taxon>Clostridiaceae</taxon>
        <taxon>Clostridium</taxon>
    </lineage>
</organism>
<sequence length="236" mass="25216">MSYNFTDPYEIARFIKEVKKSTPVKVYLKGNLEGVELGSIECYGNNDFYVLFGESDEVATFLTENKDKIVSFRLENDRRNSAIPMLDLLNINARIEPGAIIRDRVSIGDNAVIMMGAVINIGAEIGESTMVDMNAVIGARGKLGKRVHLGAGAVVAGVLEPPSKTPCIIEDDVLIGANAVILEGVKIGKGSVVAAGSVVVEDVPAGVVVAGTPAKIIKSVDEKTKDKTEILDDLRK</sequence>
<dbReference type="EC" id="2.3.1.89" evidence="1"/>
<dbReference type="EMBL" id="CP000246">
    <property type="protein sequence ID" value="ABG84547.1"/>
    <property type="molecule type" value="Genomic_DNA"/>
</dbReference>
<dbReference type="SMR" id="Q0TP51"/>
<dbReference type="STRING" id="195103.CPF_2165"/>
<dbReference type="PaxDb" id="195103-CPF_2165"/>
<dbReference type="KEGG" id="cpf:CPF_2165"/>
<dbReference type="eggNOG" id="COG2171">
    <property type="taxonomic scope" value="Bacteria"/>
</dbReference>
<dbReference type="HOGENOM" id="CLU_103751_0_0_9"/>
<dbReference type="UniPathway" id="UPA00034">
    <property type="reaction ID" value="UER00022"/>
</dbReference>
<dbReference type="Proteomes" id="UP000001823">
    <property type="component" value="Chromosome"/>
</dbReference>
<dbReference type="GO" id="GO:0047200">
    <property type="term" value="F:tetrahydrodipicolinate N-acetyltransferase activity"/>
    <property type="evidence" value="ECO:0007669"/>
    <property type="project" value="UniProtKB-EC"/>
</dbReference>
<dbReference type="GO" id="GO:0019877">
    <property type="term" value="P:diaminopimelate biosynthetic process"/>
    <property type="evidence" value="ECO:0007669"/>
    <property type="project" value="UniProtKB-UniRule"/>
</dbReference>
<dbReference type="GO" id="GO:0009089">
    <property type="term" value="P:lysine biosynthetic process via diaminopimelate"/>
    <property type="evidence" value="ECO:0007669"/>
    <property type="project" value="UniProtKB-UniRule"/>
</dbReference>
<dbReference type="CDD" id="cd03350">
    <property type="entry name" value="LbH_THP_succinylT"/>
    <property type="match status" value="1"/>
</dbReference>
<dbReference type="Gene3D" id="2.160.10.10">
    <property type="entry name" value="Hexapeptide repeat proteins"/>
    <property type="match status" value="1"/>
</dbReference>
<dbReference type="Gene3D" id="3.30.70.250">
    <property type="entry name" value="Malonyl-CoA ACP transacylase, ACP-binding"/>
    <property type="match status" value="1"/>
</dbReference>
<dbReference type="HAMAP" id="MF_01691">
    <property type="entry name" value="DapH"/>
    <property type="match status" value="1"/>
</dbReference>
<dbReference type="InterPro" id="IPR019873">
    <property type="entry name" value="DapH"/>
</dbReference>
<dbReference type="InterPro" id="IPR013710">
    <property type="entry name" value="DapH_N"/>
</dbReference>
<dbReference type="InterPro" id="IPR001451">
    <property type="entry name" value="Hexapep"/>
</dbReference>
<dbReference type="InterPro" id="IPR018357">
    <property type="entry name" value="Hexapep_transf_CS"/>
</dbReference>
<dbReference type="InterPro" id="IPR050179">
    <property type="entry name" value="Trans_hexapeptide_repeat"/>
</dbReference>
<dbReference type="InterPro" id="IPR011004">
    <property type="entry name" value="Trimer_LpxA-like_sf"/>
</dbReference>
<dbReference type="NCBIfam" id="TIGR03532">
    <property type="entry name" value="DapD_Ac"/>
    <property type="match status" value="1"/>
</dbReference>
<dbReference type="PANTHER" id="PTHR43300:SF10">
    <property type="entry name" value="2,3,4,5-TETRAHYDROPYRIDINE-2,6-DICARBOXYLATE N-ACETYLTRANSFERASE"/>
    <property type="match status" value="1"/>
</dbReference>
<dbReference type="PANTHER" id="PTHR43300">
    <property type="entry name" value="ACETYLTRANSFERASE"/>
    <property type="match status" value="1"/>
</dbReference>
<dbReference type="Pfam" id="PF08503">
    <property type="entry name" value="DapH_N"/>
    <property type="match status" value="1"/>
</dbReference>
<dbReference type="Pfam" id="PF14602">
    <property type="entry name" value="Hexapep_2"/>
    <property type="match status" value="2"/>
</dbReference>
<dbReference type="SUPFAM" id="SSF51161">
    <property type="entry name" value="Trimeric LpxA-like enzymes"/>
    <property type="match status" value="1"/>
</dbReference>
<dbReference type="PROSITE" id="PS00101">
    <property type="entry name" value="HEXAPEP_TRANSFERASES"/>
    <property type="match status" value="1"/>
</dbReference>
<reference key="1">
    <citation type="journal article" date="2006" name="Genome Res.">
        <title>Skewed genomic variability in strains of the toxigenic bacterial pathogen, Clostridium perfringens.</title>
        <authorList>
            <person name="Myers G.S.A."/>
            <person name="Rasko D.A."/>
            <person name="Cheung J.K."/>
            <person name="Ravel J."/>
            <person name="Seshadri R."/>
            <person name="DeBoy R.T."/>
            <person name="Ren Q."/>
            <person name="Varga J."/>
            <person name="Awad M.M."/>
            <person name="Brinkac L.M."/>
            <person name="Daugherty S.C."/>
            <person name="Haft D.H."/>
            <person name="Dodson R.J."/>
            <person name="Madupu R."/>
            <person name="Nelson W.C."/>
            <person name="Rosovitz M.J."/>
            <person name="Sullivan S.A."/>
            <person name="Khouri H."/>
            <person name="Dimitrov G.I."/>
            <person name="Watkins K.L."/>
            <person name="Mulligan S."/>
            <person name="Benton J."/>
            <person name="Radune D."/>
            <person name="Fisher D.J."/>
            <person name="Atkins H.S."/>
            <person name="Hiscox T."/>
            <person name="Jost B.H."/>
            <person name="Billington S.J."/>
            <person name="Songer J.G."/>
            <person name="McClane B.A."/>
            <person name="Titball R.W."/>
            <person name="Rood J.I."/>
            <person name="Melville S.B."/>
            <person name="Paulsen I.T."/>
        </authorList>
    </citation>
    <scope>NUCLEOTIDE SEQUENCE [LARGE SCALE GENOMIC DNA]</scope>
    <source>
        <strain>ATCC 13124 / DSM 756 / JCM 1290 / NCIMB 6125 / NCTC 8237 / S 107 / Type A</strain>
    </source>
</reference>
<gene>
    <name evidence="1" type="primary">dapH</name>
    <name type="ordered locus">CPF_2165</name>
</gene>
<protein>
    <recommendedName>
        <fullName evidence="1">2,3,4,5-tetrahydropyridine-2,6-dicarboxylate N-acetyltransferase</fullName>
        <ecNumber evidence="1">2.3.1.89</ecNumber>
    </recommendedName>
    <alternativeName>
        <fullName evidence="1">Tetrahydrodipicolinate N-acetyltransferase</fullName>
        <shortName evidence="1">THP acetyltransferase</shortName>
        <shortName evidence="1">Tetrahydropicolinate acetylase</shortName>
    </alternativeName>
</protein>
<evidence type="ECO:0000255" key="1">
    <source>
        <dbReference type="HAMAP-Rule" id="MF_01691"/>
    </source>
</evidence>